<proteinExistence type="evidence at protein level"/>
<keyword id="KW-1015">Disulfide bond</keyword>
<keyword id="KW-0249">Electron transport</keyword>
<keyword id="KW-0256">Endoplasmic reticulum</keyword>
<keyword id="KW-0472">Membrane</keyword>
<keyword id="KW-0539">Nucleus</keyword>
<keyword id="KW-0597">Phosphoprotein</keyword>
<keyword id="KW-0676">Redox-active center</keyword>
<keyword id="KW-1185">Reference proteome</keyword>
<keyword id="KW-0732">Signal</keyword>
<keyword id="KW-0812">Transmembrane</keyword>
<keyword id="KW-1133">Transmembrane helix</keyword>
<keyword id="KW-0813">Transport</keyword>
<comment type="subcellular location">
    <subcellularLocation>
        <location evidence="6">Nucleus inner membrane</location>
        <topology evidence="3">Single-pass type I membrane protein</topology>
    </subcellularLocation>
    <subcellularLocation>
        <location evidence="1">Endoplasmic reticulum membrane</location>
        <topology evidence="3">Single-pass type I membrane protein</topology>
    </subcellularLocation>
</comment>
<comment type="sequence caution" evidence="7">
    <conflict type="erroneous initiation">
        <sequence resource="EMBL-CDS" id="AAH50918"/>
    </conflict>
</comment>
<comment type="sequence caution" evidence="7">
    <conflict type="erroneous initiation">
        <sequence resource="EMBL-CDS" id="BAC98111"/>
    </conflict>
</comment>
<feature type="signal peptide" evidence="3">
    <location>
        <begin position="1"/>
        <end position="20"/>
    </location>
</feature>
<feature type="chain" id="PRO_0000034192" description="Thioredoxin-related transmembrane protein 4">
    <location>
        <begin position="21"/>
        <end position="335"/>
    </location>
</feature>
<feature type="transmembrane region" description="Helical" evidence="3">
    <location>
        <begin position="186"/>
        <end position="206"/>
    </location>
</feature>
<feature type="domain" description="Thioredoxin" evidence="4">
    <location>
        <begin position="26"/>
        <end position="133"/>
    </location>
</feature>
<feature type="region of interest" description="Disordered" evidence="5">
    <location>
        <begin position="222"/>
        <end position="316"/>
    </location>
</feature>
<feature type="compositionally biased region" description="Acidic residues" evidence="5">
    <location>
        <begin position="238"/>
        <end position="280"/>
    </location>
</feature>
<feature type="compositionally biased region" description="Basic and acidic residues" evidence="5">
    <location>
        <begin position="286"/>
        <end position="298"/>
    </location>
</feature>
<feature type="active site" description="Nucleophile" evidence="2">
    <location>
        <position position="60"/>
    </location>
</feature>
<feature type="active site" description="Nucleophile" evidence="2">
    <location>
        <position position="63"/>
    </location>
</feature>
<feature type="modified residue" description="Phosphoserine" evidence="1">
    <location>
        <position position="247"/>
    </location>
</feature>
<feature type="modified residue" description="Phosphoserine" evidence="1">
    <location>
        <position position="255"/>
    </location>
</feature>
<feature type="disulfide bond" description="Redox-active" evidence="4">
    <location>
        <begin position="60"/>
        <end position="63"/>
    </location>
</feature>
<feature type="sequence conflict" description="In Ref. 1; BAC27085." evidence="7" ref="1">
    <original>G</original>
    <variation>S</variation>
    <location>
        <position position="22"/>
    </location>
</feature>
<organism>
    <name type="scientific">Mus musculus</name>
    <name type="common">Mouse</name>
    <dbReference type="NCBI Taxonomy" id="10090"/>
    <lineage>
        <taxon>Eukaryota</taxon>
        <taxon>Metazoa</taxon>
        <taxon>Chordata</taxon>
        <taxon>Craniata</taxon>
        <taxon>Vertebrata</taxon>
        <taxon>Euteleostomi</taxon>
        <taxon>Mammalia</taxon>
        <taxon>Eutheria</taxon>
        <taxon>Euarchontoglires</taxon>
        <taxon>Glires</taxon>
        <taxon>Rodentia</taxon>
        <taxon>Myomorpha</taxon>
        <taxon>Muroidea</taxon>
        <taxon>Muridae</taxon>
        <taxon>Murinae</taxon>
        <taxon>Mus</taxon>
        <taxon>Mus</taxon>
    </lineage>
</organism>
<accession>Q8C0L0</accession>
<accession>Q3UHC6</accession>
<accession>Q6ZPW7</accession>
<accession>Q80X49</accession>
<reference key="1">
    <citation type="journal article" date="2005" name="Science">
        <title>The transcriptional landscape of the mammalian genome.</title>
        <authorList>
            <person name="Carninci P."/>
            <person name="Kasukawa T."/>
            <person name="Katayama S."/>
            <person name="Gough J."/>
            <person name="Frith M.C."/>
            <person name="Maeda N."/>
            <person name="Oyama R."/>
            <person name="Ravasi T."/>
            <person name="Lenhard B."/>
            <person name="Wells C."/>
            <person name="Kodzius R."/>
            <person name="Shimokawa K."/>
            <person name="Bajic V.B."/>
            <person name="Brenner S.E."/>
            <person name="Batalov S."/>
            <person name="Forrest A.R."/>
            <person name="Zavolan M."/>
            <person name="Davis M.J."/>
            <person name="Wilming L.G."/>
            <person name="Aidinis V."/>
            <person name="Allen J.E."/>
            <person name="Ambesi-Impiombato A."/>
            <person name="Apweiler R."/>
            <person name="Aturaliya R.N."/>
            <person name="Bailey T.L."/>
            <person name="Bansal M."/>
            <person name="Baxter L."/>
            <person name="Beisel K.W."/>
            <person name="Bersano T."/>
            <person name="Bono H."/>
            <person name="Chalk A.M."/>
            <person name="Chiu K.P."/>
            <person name="Choudhary V."/>
            <person name="Christoffels A."/>
            <person name="Clutterbuck D.R."/>
            <person name="Crowe M.L."/>
            <person name="Dalla E."/>
            <person name="Dalrymple B.P."/>
            <person name="de Bono B."/>
            <person name="Della Gatta G."/>
            <person name="di Bernardo D."/>
            <person name="Down T."/>
            <person name="Engstrom P."/>
            <person name="Fagiolini M."/>
            <person name="Faulkner G."/>
            <person name="Fletcher C.F."/>
            <person name="Fukushima T."/>
            <person name="Furuno M."/>
            <person name="Futaki S."/>
            <person name="Gariboldi M."/>
            <person name="Georgii-Hemming P."/>
            <person name="Gingeras T.R."/>
            <person name="Gojobori T."/>
            <person name="Green R.E."/>
            <person name="Gustincich S."/>
            <person name="Harbers M."/>
            <person name="Hayashi Y."/>
            <person name="Hensch T.K."/>
            <person name="Hirokawa N."/>
            <person name="Hill D."/>
            <person name="Huminiecki L."/>
            <person name="Iacono M."/>
            <person name="Ikeo K."/>
            <person name="Iwama A."/>
            <person name="Ishikawa T."/>
            <person name="Jakt M."/>
            <person name="Kanapin A."/>
            <person name="Katoh M."/>
            <person name="Kawasawa Y."/>
            <person name="Kelso J."/>
            <person name="Kitamura H."/>
            <person name="Kitano H."/>
            <person name="Kollias G."/>
            <person name="Krishnan S.P."/>
            <person name="Kruger A."/>
            <person name="Kummerfeld S.K."/>
            <person name="Kurochkin I.V."/>
            <person name="Lareau L.F."/>
            <person name="Lazarevic D."/>
            <person name="Lipovich L."/>
            <person name="Liu J."/>
            <person name="Liuni S."/>
            <person name="McWilliam S."/>
            <person name="Madan Babu M."/>
            <person name="Madera M."/>
            <person name="Marchionni L."/>
            <person name="Matsuda H."/>
            <person name="Matsuzawa S."/>
            <person name="Miki H."/>
            <person name="Mignone F."/>
            <person name="Miyake S."/>
            <person name="Morris K."/>
            <person name="Mottagui-Tabar S."/>
            <person name="Mulder N."/>
            <person name="Nakano N."/>
            <person name="Nakauchi H."/>
            <person name="Ng P."/>
            <person name="Nilsson R."/>
            <person name="Nishiguchi S."/>
            <person name="Nishikawa S."/>
            <person name="Nori F."/>
            <person name="Ohara O."/>
            <person name="Okazaki Y."/>
            <person name="Orlando V."/>
            <person name="Pang K.C."/>
            <person name="Pavan W.J."/>
            <person name="Pavesi G."/>
            <person name="Pesole G."/>
            <person name="Petrovsky N."/>
            <person name="Piazza S."/>
            <person name="Reed J."/>
            <person name="Reid J.F."/>
            <person name="Ring B.Z."/>
            <person name="Ringwald M."/>
            <person name="Rost B."/>
            <person name="Ruan Y."/>
            <person name="Salzberg S.L."/>
            <person name="Sandelin A."/>
            <person name="Schneider C."/>
            <person name="Schoenbach C."/>
            <person name="Sekiguchi K."/>
            <person name="Semple C.A."/>
            <person name="Seno S."/>
            <person name="Sessa L."/>
            <person name="Sheng Y."/>
            <person name="Shibata Y."/>
            <person name="Shimada H."/>
            <person name="Shimada K."/>
            <person name="Silva D."/>
            <person name="Sinclair B."/>
            <person name="Sperling S."/>
            <person name="Stupka E."/>
            <person name="Sugiura K."/>
            <person name="Sultana R."/>
            <person name="Takenaka Y."/>
            <person name="Taki K."/>
            <person name="Tammoja K."/>
            <person name="Tan S.L."/>
            <person name="Tang S."/>
            <person name="Taylor M.S."/>
            <person name="Tegner J."/>
            <person name="Teichmann S.A."/>
            <person name="Ueda H.R."/>
            <person name="van Nimwegen E."/>
            <person name="Verardo R."/>
            <person name="Wei C.L."/>
            <person name="Yagi K."/>
            <person name="Yamanishi H."/>
            <person name="Zabarovsky E."/>
            <person name="Zhu S."/>
            <person name="Zimmer A."/>
            <person name="Hide W."/>
            <person name="Bult C."/>
            <person name="Grimmond S.M."/>
            <person name="Teasdale R.D."/>
            <person name="Liu E.T."/>
            <person name="Brusic V."/>
            <person name="Quackenbush J."/>
            <person name="Wahlestedt C."/>
            <person name="Mattick J.S."/>
            <person name="Hume D.A."/>
            <person name="Kai C."/>
            <person name="Sasaki D."/>
            <person name="Tomaru Y."/>
            <person name="Fukuda S."/>
            <person name="Kanamori-Katayama M."/>
            <person name="Suzuki M."/>
            <person name="Aoki J."/>
            <person name="Arakawa T."/>
            <person name="Iida J."/>
            <person name="Imamura K."/>
            <person name="Itoh M."/>
            <person name="Kato T."/>
            <person name="Kawaji H."/>
            <person name="Kawagashira N."/>
            <person name="Kawashima T."/>
            <person name="Kojima M."/>
            <person name="Kondo S."/>
            <person name="Konno H."/>
            <person name="Nakano K."/>
            <person name="Ninomiya N."/>
            <person name="Nishio T."/>
            <person name="Okada M."/>
            <person name="Plessy C."/>
            <person name="Shibata K."/>
            <person name="Shiraki T."/>
            <person name="Suzuki S."/>
            <person name="Tagami M."/>
            <person name="Waki K."/>
            <person name="Watahiki A."/>
            <person name="Okamura-Oho Y."/>
            <person name="Suzuki H."/>
            <person name="Kawai J."/>
            <person name="Hayashizaki Y."/>
        </authorList>
    </citation>
    <scope>NUCLEOTIDE SEQUENCE [LARGE SCALE MRNA]</scope>
    <source>
        <strain>C57BL/6J</strain>
        <tissue>Head</tissue>
    </source>
</reference>
<reference key="2">
    <citation type="journal article" date="2003" name="DNA Res.">
        <title>Prediction of the coding sequences of mouse homologues of KIAA gene: III. The complete nucleotide sequences of 500 mouse KIAA-homologous cDNAs identified by screening of terminal sequences of cDNA clones randomly sampled from size-fractionated libraries.</title>
        <authorList>
            <person name="Okazaki N."/>
            <person name="Kikuno R."/>
            <person name="Ohara R."/>
            <person name="Inamoto S."/>
            <person name="Koseki H."/>
            <person name="Hiraoka S."/>
            <person name="Saga Y."/>
            <person name="Nagase T."/>
            <person name="Ohara O."/>
            <person name="Koga H."/>
        </authorList>
    </citation>
    <scope>NUCLEOTIDE SEQUENCE [LARGE SCALE MRNA]</scope>
    <source>
        <tissue>Brain</tissue>
    </source>
</reference>
<reference key="3">
    <citation type="journal article" date="2004" name="Genome Res.">
        <title>The status, quality, and expansion of the NIH full-length cDNA project: the Mammalian Gene Collection (MGC).</title>
        <authorList>
            <consortium name="The MGC Project Team"/>
        </authorList>
    </citation>
    <scope>NUCLEOTIDE SEQUENCE [LARGE SCALE MRNA]</scope>
    <source>
        <strain>C57BL/6J</strain>
        <tissue>Brain</tissue>
    </source>
</reference>
<reference key="4">
    <citation type="journal article" date="2010" name="Cell">
        <title>A tissue-specific atlas of mouse protein phosphorylation and expression.</title>
        <authorList>
            <person name="Huttlin E.L."/>
            <person name="Jedrychowski M.P."/>
            <person name="Elias J.E."/>
            <person name="Goswami T."/>
            <person name="Rad R."/>
            <person name="Beausoleil S.A."/>
            <person name="Villen J."/>
            <person name="Haas W."/>
            <person name="Sowa M.E."/>
            <person name="Gygi S.P."/>
        </authorList>
    </citation>
    <scope>IDENTIFICATION BY MASS SPECTROMETRY [LARGE SCALE ANALYSIS]</scope>
    <source>
        <tissue>Brain</tissue>
        <tissue>Heart</tissue>
        <tissue>Liver</tissue>
        <tissue>Lung</tissue>
        <tissue>Spleen</tissue>
        <tissue>Testis</tissue>
    </source>
</reference>
<reference key="5">
    <citation type="journal article" date="2019" name="Nucleus">
        <title>Identification of new transmembrane proteins concentrated at the nuclear envelope using organellar proteomics of mesenchymal cells.</title>
        <authorList>
            <person name="Cheng L.C."/>
            <person name="Baboo S."/>
            <person name="Lindsay C."/>
            <person name="Brusman L."/>
            <person name="Martinez-Bartolome S."/>
            <person name="Tapia O."/>
            <person name="Zhang X."/>
            <person name="Yates J.R. III"/>
            <person name="Gerace L."/>
        </authorList>
    </citation>
    <scope>IDENTIFICATION BY MASS SPECTROMETRY</scope>
    <scope>SUBCELLULAR LOCATION</scope>
</reference>
<name>TMX4_MOUSE</name>
<sequence>MTGGFCVPVLLAAWLAAAAAEGLEQAALPAEESRVQPMTASNWTLVMEGEWMLKFYAPWCPSCQQTDSEWETFAKNGETLQISVGKVDVIQEPGLSGRFFVTTLPAFFHAKDGIFRRYRGPGIYEDLQNYILEKKWQSVEPLTGWKSPASLTMSGMAGLFSISGKIWHLHNYFTVTLGIPAWCSYVFFVIATLVFGLFMGLILVVISECFCVPLPRASSERCEQEQSTGEAQGAEQLQDAEEEKDDSNEEENKDSLVDDEEEKEDIGDEDEGEEDEEEDNLAGIMAEERSDTNERAVVKEGSVSPKEDGAHPADTQDVVEDALRQRKSQNANKGS</sequence>
<evidence type="ECO:0000250" key="1">
    <source>
        <dbReference type="UniProtKB" id="Q9H1E5"/>
    </source>
</evidence>
<evidence type="ECO:0000250" key="2">
    <source>
        <dbReference type="UniProtKB" id="Q9H3N1"/>
    </source>
</evidence>
<evidence type="ECO:0000255" key="3"/>
<evidence type="ECO:0000255" key="4">
    <source>
        <dbReference type="PROSITE-ProRule" id="PRU00691"/>
    </source>
</evidence>
<evidence type="ECO:0000256" key="5">
    <source>
        <dbReference type="SAM" id="MobiDB-lite"/>
    </source>
</evidence>
<evidence type="ECO:0000269" key="6">
    <source>
    </source>
</evidence>
<evidence type="ECO:0000305" key="7"/>
<dbReference type="EMBL" id="AK030696">
    <property type="protein sequence ID" value="BAC27085.1"/>
    <property type="molecule type" value="mRNA"/>
</dbReference>
<dbReference type="EMBL" id="AK129301">
    <property type="protein sequence ID" value="BAC98111.1"/>
    <property type="status" value="ALT_INIT"/>
    <property type="molecule type" value="mRNA"/>
</dbReference>
<dbReference type="EMBL" id="AK147465">
    <property type="protein sequence ID" value="BAE27931.1"/>
    <property type="molecule type" value="mRNA"/>
</dbReference>
<dbReference type="EMBL" id="BC050918">
    <property type="protein sequence ID" value="AAH50918.1"/>
    <property type="status" value="ALT_INIT"/>
    <property type="molecule type" value="mRNA"/>
</dbReference>
<dbReference type="CCDS" id="CCDS16784.1"/>
<dbReference type="RefSeq" id="NP_083424.1">
    <property type="nucleotide sequence ID" value="NM_029148.1"/>
</dbReference>
<dbReference type="SMR" id="Q8C0L0"/>
<dbReference type="BioGRID" id="206848">
    <property type="interactions" value="7"/>
</dbReference>
<dbReference type="FunCoup" id="Q8C0L0">
    <property type="interactions" value="1017"/>
</dbReference>
<dbReference type="STRING" id="10090.ENSMUSP00000045154"/>
<dbReference type="iPTMnet" id="Q8C0L0"/>
<dbReference type="PhosphoSitePlus" id="Q8C0L0"/>
<dbReference type="SwissPalm" id="Q8C0L0"/>
<dbReference type="jPOST" id="Q8C0L0"/>
<dbReference type="PaxDb" id="10090-ENSMUSP00000045154"/>
<dbReference type="PeptideAtlas" id="Q8C0L0"/>
<dbReference type="ProteomicsDB" id="259444"/>
<dbReference type="Pumba" id="Q8C0L0"/>
<dbReference type="Antibodypedia" id="610">
    <property type="antibodies" value="105 antibodies from 24 providers"/>
</dbReference>
<dbReference type="Ensembl" id="ENSMUST00000038228.11">
    <property type="protein sequence ID" value="ENSMUSP00000045154.5"/>
    <property type="gene ID" value="ENSMUSG00000034723.12"/>
</dbReference>
<dbReference type="GeneID" id="52837"/>
<dbReference type="KEGG" id="mmu:52837"/>
<dbReference type="UCSC" id="uc008mnt.2">
    <property type="organism name" value="mouse"/>
</dbReference>
<dbReference type="AGR" id="MGI:106558"/>
<dbReference type="CTD" id="56255"/>
<dbReference type="MGI" id="MGI:106558">
    <property type="gene designation" value="Tmx4"/>
</dbReference>
<dbReference type="VEuPathDB" id="HostDB:ENSMUSG00000034723"/>
<dbReference type="eggNOG" id="KOG0913">
    <property type="taxonomic scope" value="Eukaryota"/>
</dbReference>
<dbReference type="GeneTree" id="ENSGT00940000160301"/>
<dbReference type="HOGENOM" id="CLU_069292_1_0_1"/>
<dbReference type="InParanoid" id="Q8C0L0"/>
<dbReference type="OMA" id="CGSNWSL"/>
<dbReference type="OrthoDB" id="7869097at2759"/>
<dbReference type="PhylomeDB" id="Q8C0L0"/>
<dbReference type="TreeFam" id="TF106376"/>
<dbReference type="BioGRID-ORCS" id="52837">
    <property type="hits" value="2 hits in 78 CRISPR screens"/>
</dbReference>
<dbReference type="ChiTaRS" id="Tmx4">
    <property type="organism name" value="mouse"/>
</dbReference>
<dbReference type="PRO" id="PR:Q8C0L0"/>
<dbReference type="Proteomes" id="UP000000589">
    <property type="component" value="Chromosome 2"/>
</dbReference>
<dbReference type="RNAct" id="Q8C0L0">
    <property type="molecule type" value="protein"/>
</dbReference>
<dbReference type="Bgee" id="ENSMUSG00000034723">
    <property type="expression patterns" value="Expressed in medial preoptic region and 219 other cell types or tissues"/>
</dbReference>
<dbReference type="ExpressionAtlas" id="Q8C0L0">
    <property type="expression patterns" value="baseline and differential"/>
</dbReference>
<dbReference type="GO" id="GO:0005783">
    <property type="term" value="C:endoplasmic reticulum"/>
    <property type="evidence" value="ECO:0000250"/>
    <property type="project" value="UniProtKB"/>
</dbReference>
<dbReference type="GO" id="GO:0005789">
    <property type="term" value="C:endoplasmic reticulum membrane"/>
    <property type="evidence" value="ECO:0007669"/>
    <property type="project" value="UniProtKB-SubCell"/>
</dbReference>
<dbReference type="GO" id="GO:0005637">
    <property type="term" value="C:nuclear inner membrane"/>
    <property type="evidence" value="ECO:0000314"/>
    <property type="project" value="UniProtKB"/>
</dbReference>
<dbReference type="Gene3D" id="3.40.30.10">
    <property type="entry name" value="Glutaredoxin"/>
    <property type="match status" value="1"/>
</dbReference>
<dbReference type="InterPro" id="IPR036249">
    <property type="entry name" value="Thioredoxin-like_sf"/>
</dbReference>
<dbReference type="InterPro" id="IPR017937">
    <property type="entry name" value="Thioredoxin_CS"/>
</dbReference>
<dbReference type="InterPro" id="IPR013766">
    <property type="entry name" value="Thioredoxin_domain"/>
</dbReference>
<dbReference type="InterPro" id="IPR052454">
    <property type="entry name" value="TMX_domain-containing"/>
</dbReference>
<dbReference type="PANTHER" id="PTHR46107">
    <property type="entry name" value="DUMPY: SHORTER THAN WILD-TYPE"/>
    <property type="match status" value="1"/>
</dbReference>
<dbReference type="PANTHER" id="PTHR46107:SF1">
    <property type="entry name" value="THIOREDOXIN-RELATED TRANSMEMBRANE PROTEIN 4"/>
    <property type="match status" value="1"/>
</dbReference>
<dbReference type="Pfam" id="PF00085">
    <property type="entry name" value="Thioredoxin"/>
    <property type="match status" value="1"/>
</dbReference>
<dbReference type="SUPFAM" id="SSF52833">
    <property type="entry name" value="Thioredoxin-like"/>
    <property type="match status" value="1"/>
</dbReference>
<dbReference type="PROSITE" id="PS00194">
    <property type="entry name" value="THIOREDOXIN_1"/>
    <property type="match status" value="1"/>
</dbReference>
<dbReference type="PROSITE" id="PS51352">
    <property type="entry name" value="THIOREDOXIN_2"/>
    <property type="match status" value="1"/>
</dbReference>
<protein>
    <recommendedName>
        <fullName>Thioredoxin-related transmembrane protein 4</fullName>
    </recommendedName>
    <alternativeName>
        <fullName>Thioredoxin domain-containing protein 13</fullName>
    </alternativeName>
</protein>
<gene>
    <name type="primary">Tmx4</name>
    <name type="synonym">D2Bwg1356e</name>
    <name type="synonym">Kiaa1162</name>
    <name type="synonym">Txndc13</name>
</gene>